<reference key="1">
    <citation type="journal article" date="2002" name="Nature">
        <title>Sequence and analysis of rice chromosome 4.</title>
        <authorList>
            <person name="Feng Q."/>
            <person name="Zhang Y."/>
            <person name="Hao P."/>
            <person name="Wang S."/>
            <person name="Fu G."/>
            <person name="Huang Y."/>
            <person name="Li Y."/>
            <person name="Zhu J."/>
            <person name="Liu Y."/>
            <person name="Hu X."/>
            <person name="Jia P."/>
            <person name="Zhang Y."/>
            <person name="Zhao Q."/>
            <person name="Ying K."/>
            <person name="Yu S."/>
            <person name="Tang Y."/>
            <person name="Weng Q."/>
            <person name="Zhang L."/>
            <person name="Lu Y."/>
            <person name="Mu J."/>
            <person name="Lu Y."/>
            <person name="Zhang L.S."/>
            <person name="Yu Z."/>
            <person name="Fan D."/>
            <person name="Liu X."/>
            <person name="Lu T."/>
            <person name="Li C."/>
            <person name="Wu Y."/>
            <person name="Sun T."/>
            <person name="Lei H."/>
            <person name="Li T."/>
            <person name="Hu H."/>
            <person name="Guan J."/>
            <person name="Wu M."/>
            <person name="Zhang R."/>
            <person name="Zhou B."/>
            <person name="Chen Z."/>
            <person name="Chen L."/>
            <person name="Jin Z."/>
            <person name="Wang R."/>
            <person name="Yin H."/>
            <person name="Cai Z."/>
            <person name="Ren S."/>
            <person name="Lv G."/>
            <person name="Gu W."/>
            <person name="Zhu G."/>
            <person name="Tu Y."/>
            <person name="Jia J."/>
            <person name="Zhang Y."/>
            <person name="Chen J."/>
            <person name="Kang H."/>
            <person name="Chen X."/>
            <person name="Shao C."/>
            <person name="Sun Y."/>
            <person name="Hu Q."/>
            <person name="Zhang X."/>
            <person name="Zhang W."/>
            <person name="Wang L."/>
            <person name="Ding C."/>
            <person name="Sheng H."/>
            <person name="Gu J."/>
            <person name="Chen S."/>
            <person name="Ni L."/>
            <person name="Zhu F."/>
            <person name="Chen W."/>
            <person name="Lan L."/>
            <person name="Lai Y."/>
            <person name="Cheng Z."/>
            <person name="Gu M."/>
            <person name="Jiang J."/>
            <person name="Li J."/>
            <person name="Hong G."/>
            <person name="Xue Y."/>
            <person name="Han B."/>
        </authorList>
    </citation>
    <scope>NUCLEOTIDE SEQUENCE [LARGE SCALE GENOMIC DNA]</scope>
    <source>
        <strain>cv. Nipponbare</strain>
    </source>
</reference>
<reference key="2">
    <citation type="journal article" date="2005" name="Nature">
        <title>The map-based sequence of the rice genome.</title>
        <authorList>
            <consortium name="International rice genome sequencing project (IRGSP)"/>
        </authorList>
    </citation>
    <scope>NUCLEOTIDE SEQUENCE [LARGE SCALE GENOMIC DNA]</scope>
    <source>
        <strain>cv. Nipponbare</strain>
    </source>
</reference>
<reference key="3">
    <citation type="journal article" date="2008" name="Nucleic Acids Res.">
        <title>The rice annotation project database (RAP-DB): 2008 update.</title>
        <authorList>
            <consortium name="The rice annotation project (RAP)"/>
        </authorList>
    </citation>
    <scope>GENOME REANNOTATION</scope>
    <source>
        <strain>cv. Nipponbare</strain>
    </source>
</reference>
<reference key="4">
    <citation type="journal article" date="2013" name="Rice">
        <title>Improvement of the Oryza sativa Nipponbare reference genome using next generation sequence and optical map data.</title>
        <authorList>
            <person name="Kawahara Y."/>
            <person name="de la Bastide M."/>
            <person name="Hamilton J.P."/>
            <person name="Kanamori H."/>
            <person name="McCombie W.R."/>
            <person name="Ouyang S."/>
            <person name="Schwartz D.C."/>
            <person name="Tanaka T."/>
            <person name="Wu J."/>
            <person name="Zhou S."/>
            <person name="Childs K.L."/>
            <person name="Davidson R.M."/>
            <person name="Lin H."/>
            <person name="Quesada-Ocampo L."/>
            <person name="Vaillancourt B."/>
            <person name="Sakai H."/>
            <person name="Lee S.S."/>
            <person name="Kim J."/>
            <person name="Numa H."/>
            <person name="Itoh T."/>
            <person name="Buell C.R."/>
            <person name="Matsumoto T."/>
        </authorList>
    </citation>
    <scope>GENOME REANNOTATION</scope>
    <source>
        <strain>cv. Nipponbare</strain>
    </source>
</reference>
<reference key="5">
    <citation type="journal article" date="2003" name="Science">
        <title>Collection, mapping, and annotation of over 28,000 cDNA clones from japonica rice.</title>
        <authorList>
            <consortium name="The rice full-length cDNA consortium"/>
        </authorList>
    </citation>
    <scope>NUCLEOTIDE SEQUENCE [LARGE SCALE MRNA] OF 760-1136</scope>
    <source>
        <strain>cv. Nipponbare</strain>
    </source>
</reference>
<reference key="6">
    <citation type="journal article" date="2008" name="BMC Genomics">
        <title>Genome-wide identification, organization and phylogenetic analysis of dicer-like, argonaute and RNA-dependent RNA polymerase gene families and their expression analysis during reproductive development and stress in rice.</title>
        <authorList>
            <person name="Kapoor M."/>
            <person name="Arora R."/>
            <person name="Lama T."/>
            <person name="Nijhawan A."/>
            <person name="Khurana J.P."/>
            <person name="Tyagi A.K."/>
            <person name="Kapoor S."/>
        </authorList>
    </citation>
    <scope>GENE FAMILY</scope>
    <scope>NOMENCLATURE</scope>
</reference>
<dbReference type="EC" id="2.7.7.48"/>
<dbReference type="EMBL" id="AL606653">
    <property type="protein sequence ID" value="CAE04828.1"/>
    <property type="molecule type" value="Genomic_DNA"/>
</dbReference>
<dbReference type="EMBL" id="AP008210">
    <property type="protein sequence ID" value="BAF14941.1"/>
    <property type="status" value="ALT_SEQ"/>
    <property type="molecule type" value="Genomic_DNA"/>
</dbReference>
<dbReference type="EMBL" id="AP014960">
    <property type="status" value="NOT_ANNOTATED_CDS"/>
    <property type="molecule type" value="Genomic_DNA"/>
</dbReference>
<dbReference type="EMBL" id="AK064379">
    <property type="status" value="NOT_ANNOTATED_CDS"/>
    <property type="molecule type" value="mRNA"/>
</dbReference>
<dbReference type="RefSeq" id="XP_015636884.1">
    <property type="nucleotide sequence ID" value="XM_015781398.1"/>
</dbReference>
<dbReference type="SMR" id="Q7XM31"/>
<dbReference type="FunCoup" id="Q7XM31">
    <property type="interactions" value="113"/>
</dbReference>
<dbReference type="STRING" id="39947.Q7XM31"/>
<dbReference type="PaxDb" id="39947-Q7XM31"/>
<dbReference type="EnsemblPlants" id="Os04t0465700-01">
    <property type="protein sequence ID" value="Os04t0465700-01"/>
    <property type="gene ID" value="Os04g0465700"/>
</dbReference>
<dbReference type="Gramene" id="Os04t0465700-01">
    <property type="protein sequence ID" value="Os04t0465700-01"/>
    <property type="gene ID" value="Os04g0465700"/>
</dbReference>
<dbReference type="KEGG" id="dosa:Os04g0465700"/>
<dbReference type="eggNOG" id="KOG0988">
    <property type="taxonomic scope" value="Eukaryota"/>
</dbReference>
<dbReference type="HOGENOM" id="CLU_001366_1_1_1"/>
<dbReference type="InParanoid" id="Q7XM31"/>
<dbReference type="OrthoDB" id="6513042at2759"/>
<dbReference type="Proteomes" id="UP000000763">
    <property type="component" value="Chromosome 4"/>
</dbReference>
<dbReference type="Proteomes" id="UP000059680">
    <property type="component" value="Chromosome 4"/>
</dbReference>
<dbReference type="GO" id="GO:0031380">
    <property type="term" value="C:nuclear RNA-directed RNA polymerase complex"/>
    <property type="evidence" value="ECO:0000318"/>
    <property type="project" value="GO_Central"/>
</dbReference>
<dbReference type="GO" id="GO:0003723">
    <property type="term" value="F:RNA binding"/>
    <property type="evidence" value="ECO:0007669"/>
    <property type="project" value="UniProtKB-KW"/>
</dbReference>
<dbReference type="GO" id="GO:0003968">
    <property type="term" value="F:RNA-directed RNA polymerase activity"/>
    <property type="evidence" value="ECO:0000318"/>
    <property type="project" value="GO_Central"/>
</dbReference>
<dbReference type="GO" id="GO:0030422">
    <property type="term" value="P:siRNA processing"/>
    <property type="evidence" value="ECO:0000318"/>
    <property type="project" value="GO_Central"/>
</dbReference>
<dbReference type="InterPro" id="IPR007855">
    <property type="entry name" value="RNA-dep_RNA_pol_euk-typ"/>
</dbReference>
<dbReference type="PANTHER" id="PTHR23079">
    <property type="entry name" value="RNA-DEPENDENT RNA POLYMERASE"/>
    <property type="match status" value="1"/>
</dbReference>
<dbReference type="PANTHER" id="PTHR23079:SF5">
    <property type="entry name" value="RNA-DEPENDENT RNA POLYMERASE 2"/>
    <property type="match status" value="1"/>
</dbReference>
<dbReference type="Pfam" id="PF24823">
    <property type="entry name" value="PH_RDR2"/>
    <property type="match status" value="1"/>
</dbReference>
<dbReference type="Pfam" id="PF05183">
    <property type="entry name" value="RdRP"/>
    <property type="match status" value="1"/>
</dbReference>
<feature type="chain" id="PRO_0000378446" description="Probable RNA-dependent RNA polymerase 2">
    <location>
        <begin position="1"/>
        <end position="1136"/>
    </location>
</feature>
<feature type="region of interest" description="Disordered" evidence="2">
    <location>
        <begin position="965"/>
        <end position="989"/>
    </location>
</feature>
<feature type="compositionally biased region" description="Low complexity" evidence="2">
    <location>
        <begin position="967"/>
        <end position="980"/>
    </location>
</feature>
<feature type="sequence conflict" description="In Ref. 5; AK064379." evidence="3" ref="5">
    <original>E</original>
    <variation>G</variation>
    <location>
        <position position="993"/>
    </location>
</feature>
<feature type="sequence conflict" description="In Ref. 5; AK064379." evidence="3" ref="5">
    <original>A</original>
    <variation>V</variation>
    <location>
        <position position="1052"/>
    </location>
</feature>
<protein>
    <recommendedName>
        <fullName>Probable RNA-dependent RNA polymerase 2</fullName>
        <shortName>OsRDR2</shortName>
        <ecNumber>2.7.7.48</ecNumber>
    </recommendedName>
</protein>
<evidence type="ECO:0000250" key="1"/>
<evidence type="ECO:0000256" key="2">
    <source>
        <dbReference type="SAM" id="MobiDB-lite"/>
    </source>
</evidence>
<evidence type="ECO:0000305" key="3"/>
<keyword id="KW-0548">Nucleotidyltransferase</keyword>
<keyword id="KW-1185">Reference proteome</keyword>
<keyword id="KW-0694">RNA-binding</keyword>
<keyword id="KW-0696">RNA-directed RNA polymerase</keyword>
<keyword id="KW-0943">RNA-mediated gene silencing</keyword>
<keyword id="KW-0808">Transferase</keyword>
<organism>
    <name type="scientific">Oryza sativa subsp. japonica</name>
    <name type="common">Rice</name>
    <dbReference type="NCBI Taxonomy" id="39947"/>
    <lineage>
        <taxon>Eukaryota</taxon>
        <taxon>Viridiplantae</taxon>
        <taxon>Streptophyta</taxon>
        <taxon>Embryophyta</taxon>
        <taxon>Tracheophyta</taxon>
        <taxon>Spermatophyta</taxon>
        <taxon>Magnoliopsida</taxon>
        <taxon>Liliopsida</taxon>
        <taxon>Poales</taxon>
        <taxon>Poaceae</taxon>
        <taxon>BOP clade</taxon>
        <taxon>Oryzoideae</taxon>
        <taxon>Oryzeae</taxon>
        <taxon>Oryzinae</taxon>
        <taxon>Oryza</taxon>
        <taxon>Oryza sativa</taxon>
    </lineage>
</organism>
<sequence length="1136" mass="126925">MPTAAAAATASLRVSNIPPSAVAAELLAFFDSAVAVAGGAFACEIAAAHRGWLSRGHGTVQFGSAAAAAAAAGLASSGRLPRFLGALLSVSPSPVDLLPRASDLSLRAAGAGLVVGDRVAERVFEAADAWDGVRAEVIPGKRRVDLYLEHDSQRYKLEVLFEDMKDCLGCTLDGMGAILLQLNYAPRIHTAISGPAVNSRFMDDRFHACKEDAKFSWVRALDFTPNYSFGRCSTLVLKLGKSALVSDILKSLPFSGNLGELTMNSMDGVGASSNVVPLVHCPRDYSVPYEVLFRLNSLMHMGKIVAKHVNADLFKALQELPVDVSRRIFEKMHKLESTCYGPLQFIQQEAYSMKRSHNVLLSNEGEGEGERKLMKCYRVNITPSKIFCFGPEEEVTNYVVKHHSAYASDFVRVTFVDEDWSKLSSNAISARIEQGFFSKPFKTGLYYRILSILKKGFSIGPKNFEFLAFSASQLRGNSVWMFASNASLNAGGIRRWMGHFENIRSVSKCAARMGQLFSSSRQTFEVLRWDVEVIPDIEITTDGSKYIFSDGIGKISLRFAKRVAHHVGLDPTNLPSAFQIRYGGYKGVIAIDPMSSIDLSLRPSMKKFESESRMLNITSWSKSQPCYVNREIISLLSTLGIRDEIFVAMQQDEMRETEEMLTNKEVALSVLGKLGGSETKTAVKMLLQGYEPSSEPYLSMILKAHQENRLTDIRTRCKIHVPKGRVLIGCLDETGVLEYGQVYIRITKNSKEQKDSNQSYFYNDDGKTATVVGKVAITKNPCLHPGDIRVLEAIYDPDLVGMVDCLVFPQRGERPHPNECSGGDLDGDLYFITWDDKLIPEKVDTPMDYTATRPRIMDHVVTLEEIQKHFVDYMINDSLGAISTAHLIHADRSPLKARSPECLQLATLHSMAVDFAKTGAPAEMPRTLRPREYPDFMERWEKPMYISNGVLGKLYRSAMGHMEKSGDSGALSSSSAQPSPTYDPDLEVPGSDEFLQAAEEYYELYEEKLTTLMNYYRAELEDEILTGNIRNKMLYLKRDNKRYFEMKDRIVAAVDALHREARGWLLSSRKEEDASRMASAWYRVTYHPDRRRGKRFWSFPWIACDNLLAIKASSQLRRRRQKDDDSTAVVQMDCSA</sequence>
<gene>
    <name type="primary">RDR2</name>
    <name type="ordered locus">Os04g0465700</name>
    <name type="ordered locus">LOC_Os04g39160</name>
    <name type="ORF">OSJNBb0048E02.13</name>
</gene>
<proteinExistence type="evidence at transcript level"/>
<accession>Q7XM31</accession>
<accession>Q0JCJ6</accession>
<comment type="function">
    <text evidence="1">Probably involved in the RNA silencing pathway and required for the generation of small interfering RNAs (siRNAs).</text>
</comment>
<comment type="catalytic activity">
    <reaction>
        <text>RNA(n) + a ribonucleoside 5'-triphosphate = RNA(n+1) + diphosphate</text>
        <dbReference type="Rhea" id="RHEA:21248"/>
        <dbReference type="Rhea" id="RHEA-COMP:14527"/>
        <dbReference type="Rhea" id="RHEA-COMP:17342"/>
        <dbReference type="ChEBI" id="CHEBI:33019"/>
        <dbReference type="ChEBI" id="CHEBI:61557"/>
        <dbReference type="ChEBI" id="CHEBI:140395"/>
        <dbReference type="EC" id="2.7.7.48"/>
    </reaction>
</comment>
<comment type="similarity">
    <text evidence="3">Belongs to the RdRP family.</text>
</comment>
<comment type="sequence caution" evidence="3">
    <conflict type="erroneous gene model prediction">
        <sequence resource="EMBL-CDS" id="BAF14941"/>
    </conflict>
</comment>
<name>RDR2_ORYSJ</name>